<accession>Q4FN13</accession>
<name>PURA_PELUB</name>
<dbReference type="EC" id="6.3.4.4" evidence="1"/>
<dbReference type="EMBL" id="CP000084">
    <property type="protein sequence ID" value="AAZ21426.1"/>
    <property type="molecule type" value="Genomic_DNA"/>
</dbReference>
<dbReference type="RefSeq" id="WP_011281807.1">
    <property type="nucleotide sequence ID" value="NC_007205.1"/>
</dbReference>
<dbReference type="SMR" id="Q4FN13"/>
<dbReference type="STRING" id="335992.SAR11_0605"/>
<dbReference type="GeneID" id="66295110"/>
<dbReference type="KEGG" id="pub:SAR11_0605"/>
<dbReference type="eggNOG" id="COG0104">
    <property type="taxonomic scope" value="Bacteria"/>
</dbReference>
<dbReference type="HOGENOM" id="CLU_029848_0_0_5"/>
<dbReference type="OrthoDB" id="9807553at2"/>
<dbReference type="UniPathway" id="UPA00075">
    <property type="reaction ID" value="UER00335"/>
</dbReference>
<dbReference type="Proteomes" id="UP000002528">
    <property type="component" value="Chromosome"/>
</dbReference>
<dbReference type="GO" id="GO:0005737">
    <property type="term" value="C:cytoplasm"/>
    <property type="evidence" value="ECO:0007669"/>
    <property type="project" value="UniProtKB-SubCell"/>
</dbReference>
<dbReference type="GO" id="GO:0004019">
    <property type="term" value="F:adenylosuccinate synthase activity"/>
    <property type="evidence" value="ECO:0007669"/>
    <property type="project" value="UniProtKB-UniRule"/>
</dbReference>
<dbReference type="GO" id="GO:0005525">
    <property type="term" value="F:GTP binding"/>
    <property type="evidence" value="ECO:0007669"/>
    <property type="project" value="UniProtKB-UniRule"/>
</dbReference>
<dbReference type="GO" id="GO:0000287">
    <property type="term" value="F:magnesium ion binding"/>
    <property type="evidence" value="ECO:0007669"/>
    <property type="project" value="UniProtKB-UniRule"/>
</dbReference>
<dbReference type="GO" id="GO:0044208">
    <property type="term" value="P:'de novo' AMP biosynthetic process"/>
    <property type="evidence" value="ECO:0007669"/>
    <property type="project" value="UniProtKB-UniRule"/>
</dbReference>
<dbReference type="GO" id="GO:0046040">
    <property type="term" value="P:IMP metabolic process"/>
    <property type="evidence" value="ECO:0007669"/>
    <property type="project" value="TreeGrafter"/>
</dbReference>
<dbReference type="CDD" id="cd03108">
    <property type="entry name" value="AdSS"/>
    <property type="match status" value="1"/>
</dbReference>
<dbReference type="FunFam" id="1.10.300.10:FF:000001">
    <property type="entry name" value="Adenylosuccinate synthetase"/>
    <property type="match status" value="1"/>
</dbReference>
<dbReference type="FunFam" id="3.90.170.10:FF:000001">
    <property type="entry name" value="Adenylosuccinate synthetase"/>
    <property type="match status" value="1"/>
</dbReference>
<dbReference type="Gene3D" id="3.40.440.10">
    <property type="entry name" value="Adenylosuccinate Synthetase, subunit A, domain 1"/>
    <property type="match status" value="1"/>
</dbReference>
<dbReference type="Gene3D" id="1.10.300.10">
    <property type="entry name" value="Adenylosuccinate Synthetase, subunit A, domain 2"/>
    <property type="match status" value="1"/>
</dbReference>
<dbReference type="Gene3D" id="3.90.170.10">
    <property type="entry name" value="Adenylosuccinate Synthetase, subunit A, domain 3"/>
    <property type="match status" value="1"/>
</dbReference>
<dbReference type="HAMAP" id="MF_00011">
    <property type="entry name" value="Adenylosucc_synth"/>
    <property type="match status" value="1"/>
</dbReference>
<dbReference type="InterPro" id="IPR018220">
    <property type="entry name" value="Adenylosuccin_syn_GTP-bd"/>
</dbReference>
<dbReference type="InterPro" id="IPR033128">
    <property type="entry name" value="Adenylosuccin_syn_Lys_AS"/>
</dbReference>
<dbReference type="InterPro" id="IPR042109">
    <property type="entry name" value="Adenylosuccinate_synth_dom1"/>
</dbReference>
<dbReference type="InterPro" id="IPR042110">
    <property type="entry name" value="Adenylosuccinate_synth_dom2"/>
</dbReference>
<dbReference type="InterPro" id="IPR042111">
    <property type="entry name" value="Adenylosuccinate_synth_dom3"/>
</dbReference>
<dbReference type="InterPro" id="IPR001114">
    <property type="entry name" value="Adenylosuccinate_synthetase"/>
</dbReference>
<dbReference type="InterPro" id="IPR027417">
    <property type="entry name" value="P-loop_NTPase"/>
</dbReference>
<dbReference type="NCBIfam" id="NF002223">
    <property type="entry name" value="PRK01117.1"/>
    <property type="match status" value="1"/>
</dbReference>
<dbReference type="NCBIfam" id="TIGR00184">
    <property type="entry name" value="purA"/>
    <property type="match status" value="1"/>
</dbReference>
<dbReference type="PANTHER" id="PTHR11846">
    <property type="entry name" value="ADENYLOSUCCINATE SYNTHETASE"/>
    <property type="match status" value="1"/>
</dbReference>
<dbReference type="PANTHER" id="PTHR11846:SF0">
    <property type="entry name" value="ADENYLOSUCCINATE SYNTHETASE"/>
    <property type="match status" value="1"/>
</dbReference>
<dbReference type="Pfam" id="PF00709">
    <property type="entry name" value="Adenylsucc_synt"/>
    <property type="match status" value="1"/>
</dbReference>
<dbReference type="SMART" id="SM00788">
    <property type="entry name" value="Adenylsucc_synt"/>
    <property type="match status" value="1"/>
</dbReference>
<dbReference type="SUPFAM" id="SSF52540">
    <property type="entry name" value="P-loop containing nucleoside triphosphate hydrolases"/>
    <property type="match status" value="1"/>
</dbReference>
<dbReference type="PROSITE" id="PS01266">
    <property type="entry name" value="ADENYLOSUCCIN_SYN_1"/>
    <property type="match status" value="1"/>
</dbReference>
<dbReference type="PROSITE" id="PS00513">
    <property type="entry name" value="ADENYLOSUCCIN_SYN_2"/>
    <property type="match status" value="1"/>
</dbReference>
<keyword id="KW-0963">Cytoplasm</keyword>
<keyword id="KW-0342">GTP-binding</keyword>
<keyword id="KW-0436">Ligase</keyword>
<keyword id="KW-0460">Magnesium</keyword>
<keyword id="KW-0479">Metal-binding</keyword>
<keyword id="KW-0547">Nucleotide-binding</keyword>
<keyword id="KW-0658">Purine biosynthesis</keyword>
<keyword id="KW-1185">Reference proteome</keyword>
<feature type="chain" id="PRO_0000224300" description="Adenylosuccinate synthetase">
    <location>
        <begin position="1"/>
        <end position="430"/>
    </location>
</feature>
<feature type="active site" description="Proton acceptor" evidence="1">
    <location>
        <position position="13"/>
    </location>
</feature>
<feature type="active site" description="Proton donor" evidence="1">
    <location>
        <position position="41"/>
    </location>
</feature>
<feature type="binding site" evidence="1">
    <location>
        <begin position="12"/>
        <end position="18"/>
    </location>
    <ligand>
        <name>GTP</name>
        <dbReference type="ChEBI" id="CHEBI:37565"/>
    </ligand>
</feature>
<feature type="binding site" description="in other chain" evidence="1">
    <location>
        <begin position="13"/>
        <end position="16"/>
    </location>
    <ligand>
        <name>IMP</name>
        <dbReference type="ChEBI" id="CHEBI:58053"/>
        <note>ligand shared between dimeric partners</note>
    </ligand>
</feature>
<feature type="binding site" evidence="1">
    <location>
        <position position="13"/>
    </location>
    <ligand>
        <name>Mg(2+)</name>
        <dbReference type="ChEBI" id="CHEBI:18420"/>
    </ligand>
</feature>
<feature type="binding site" description="in other chain" evidence="1">
    <location>
        <begin position="38"/>
        <end position="41"/>
    </location>
    <ligand>
        <name>IMP</name>
        <dbReference type="ChEBI" id="CHEBI:58053"/>
        <note>ligand shared between dimeric partners</note>
    </ligand>
</feature>
<feature type="binding site" evidence="1">
    <location>
        <begin position="40"/>
        <end position="42"/>
    </location>
    <ligand>
        <name>GTP</name>
        <dbReference type="ChEBI" id="CHEBI:37565"/>
    </ligand>
</feature>
<feature type="binding site" evidence="1">
    <location>
        <position position="40"/>
    </location>
    <ligand>
        <name>Mg(2+)</name>
        <dbReference type="ChEBI" id="CHEBI:18420"/>
    </ligand>
</feature>
<feature type="binding site" description="in other chain" evidence="1">
    <location>
        <position position="130"/>
    </location>
    <ligand>
        <name>IMP</name>
        <dbReference type="ChEBI" id="CHEBI:58053"/>
        <note>ligand shared between dimeric partners</note>
    </ligand>
</feature>
<feature type="binding site" evidence="1">
    <location>
        <position position="144"/>
    </location>
    <ligand>
        <name>IMP</name>
        <dbReference type="ChEBI" id="CHEBI:58053"/>
        <note>ligand shared between dimeric partners</note>
    </ligand>
</feature>
<feature type="binding site" description="in other chain" evidence="1">
    <location>
        <position position="224"/>
    </location>
    <ligand>
        <name>IMP</name>
        <dbReference type="ChEBI" id="CHEBI:58053"/>
        <note>ligand shared between dimeric partners</note>
    </ligand>
</feature>
<feature type="binding site" description="in other chain" evidence="1">
    <location>
        <position position="239"/>
    </location>
    <ligand>
        <name>IMP</name>
        <dbReference type="ChEBI" id="CHEBI:58053"/>
        <note>ligand shared between dimeric partners</note>
    </ligand>
</feature>
<feature type="binding site" evidence="1">
    <location>
        <begin position="299"/>
        <end position="305"/>
    </location>
    <ligand>
        <name>substrate</name>
    </ligand>
</feature>
<feature type="binding site" description="in other chain" evidence="1">
    <location>
        <position position="303"/>
    </location>
    <ligand>
        <name>IMP</name>
        <dbReference type="ChEBI" id="CHEBI:58053"/>
        <note>ligand shared between dimeric partners</note>
    </ligand>
</feature>
<feature type="binding site" evidence="1">
    <location>
        <position position="305"/>
    </location>
    <ligand>
        <name>GTP</name>
        <dbReference type="ChEBI" id="CHEBI:37565"/>
    </ligand>
</feature>
<feature type="binding site" evidence="1">
    <location>
        <begin position="331"/>
        <end position="333"/>
    </location>
    <ligand>
        <name>GTP</name>
        <dbReference type="ChEBI" id="CHEBI:37565"/>
    </ligand>
</feature>
<feature type="binding site" evidence="1">
    <location>
        <begin position="413"/>
        <end position="415"/>
    </location>
    <ligand>
        <name>GTP</name>
        <dbReference type="ChEBI" id="CHEBI:37565"/>
    </ligand>
</feature>
<comment type="function">
    <text evidence="1">Plays an important role in the de novo pathway of purine nucleotide biosynthesis. Catalyzes the first committed step in the biosynthesis of AMP from IMP.</text>
</comment>
<comment type="catalytic activity">
    <reaction evidence="1">
        <text>IMP + L-aspartate + GTP = N(6)-(1,2-dicarboxyethyl)-AMP + GDP + phosphate + 2 H(+)</text>
        <dbReference type="Rhea" id="RHEA:15753"/>
        <dbReference type="ChEBI" id="CHEBI:15378"/>
        <dbReference type="ChEBI" id="CHEBI:29991"/>
        <dbReference type="ChEBI" id="CHEBI:37565"/>
        <dbReference type="ChEBI" id="CHEBI:43474"/>
        <dbReference type="ChEBI" id="CHEBI:57567"/>
        <dbReference type="ChEBI" id="CHEBI:58053"/>
        <dbReference type="ChEBI" id="CHEBI:58189"/>
        <dbReference type="EC" id="6.3.4.4"/>
    </reaction>
</comment>
<comment type="cofactor">
    <cofactor evidence="1">
        <name>Mg(2+)</name>
        <dbReference type="ChEBI" id="CHEBI:18420"/>
    </cofactor>
    <text evidence="1">Binds 1 Mg(2+) ion per subunit.</text>
</comment>
<comment type="pathway">
    <text evidence="1">Purine metabolism; AMP biosynthesis via de novo pathway; AMP from IMP: step 1/2.</text>
</comment>
<comment type="subunit">
    <text evidence="1">Homodimer.</text>
</comment>
<comment type="subcellular location">
    <subcellularLocation>
        <location evidence="1">Cytoplasm</location>
    </subcellularLocation>
</comment>
<comment type="similarity">
    <text evidence="1">Belongs to the adenylosuccinate synthetase family.</text>
</comment>
<gene>
    <name evidence="1" type="primary">purA</name>
    <name type="ordered locus">SAR11_0605</name>
</gene>
<protein>
    <recommendedName>
        <fullName evidence="1">Adenylosuccinate synthetase</fullName>
        <shortName evidence="1">AMPSase</shortName>
        <shortName evidence="1">AdSS</shortName>
        <ecNumber evidence="1">6.3.4.4</ecNumber>
    </recommendedName>
    <alternativeName>
        <fullName evidence="1">IMP--aspartate ligase</fullName>
    </alternativeName>
</protein>
<evidence type="ECO:0000255" key="1">
    <source>
        <dbReference type="HAMAP-Rule" id="MF_00011"/>
    </source>
</evidence>
<reference key="1">
    <citation type="journal article" date="2005" name="Science">
        <title>Genome streamlining in a cosmopolitan oceanic bacterium.</title>
        <authorList>
            <person name="Giovannoni S.J."/>
            <person name="Tripp H.J."/>
            <person name="Givan S."/>
            <person name="Podar M."/>
            <person name="Vergin K.L."/>
            <person name="Baptista D."/>
            <person name="Bibbs L."/>
            <person name="Eads J."/>
            <person name="Richardson T.H."/>
            <person name="Noordewier M."/>
            <person name="Rappe M.S."/>
            <person name="Short J.M."/>
            <person name="Carrington J.C."/>
            <person name="Mathur E.J."/>
        </authorList>
    </citation>
    <scope>NUCLEOTIDE SEQUENCE [LARGE SCALE GENOMIC DNA]</scope>
    <source>
        <strain>HTCC1062</strain>
    </source>
</reference>
<sequence>MKNVVVVGSQWGDEGKGKIVDWLSDQADVVIRFQGGHNAGHTLVIDGTTYKLRLLPSGIVRKNKISIIGNGVVVDPWALLEEIEEIKSKGVEVNVDNFIISESANLILPFHREMDEIREDAAGKGKIGTTRRGIGPAYEDKVGRRSIRVMDLRSETNLDHRLETVLLHHNAIRKGLGKKIFEKDKLKEELLKIAPEILKFSQPVWLRIDEFKKQKKRILFEGAQGILLDVDHGTYPFVTSSNTVASAAATGTGCGPNSIHYVLGITKAYTTRVGEGPFPTELTDDIGELLGSRGKEFGTVTSRKRRCGWFDGVLVRQTIKISGIDGIALTKLDVLDELDEIKMCVEYELDGKKMDYLPAAVEDQLKIKPIYKTFPGWKSSTQGIKNIENLPENAKNYIYALEDFIGTKVSSISTSPEREDTILLENPFEV</sequence>
<organism>
    <name type="scientific">Pelagibacter ubique (strain HTCC1062)</name>
    <dbReference type="NCBI Taxonomy" id="335992"/>
    <lineage>
        <taxon>Bacteria</taxon>
        <taxon>Pseudomonadati</taxon>
        <taxon>Pseudomonadota</taxon>
        <taxon>Alphaproteobacteria</taxon>
        <taxon>Candidatus Pelagibacterales</taxon>
        <taxon>Candidatus Pelagibacteraceae</taxon>
        <taxon>Candidatus Pelagibacter</taxon>
    </lineage>
</organism>
<proteinExistence type="inferred from homology"/>